<evidence type="ECO:0000255" key="1">
    <source>
        <dbReference type="HAMAP-Rule" id="MF_00081"/>
    </source>
</evidence>
<dbReference type="EMBL" id="CP000478">
    <property type="protein sequence ID" value="ABK16728.1"/>
    <property type="molecule type" value="Genomic_DNA"/>
</dbReference>
<dbReference type="RefSeq" id="WP_011697899.1">
    <property type="nucleotide sequence ID" value="NC_008554.1"/>
</dbReference>
<dbReference type="SMR" id="A0LH26"/>
<dbReference type="STRING" id="335543.Sfum_1034"/>
<dbReference type="KEGG" id="sfu:Sfum_1034"/>
<dbReference type="eggNOG" id="COG1420">
    <property type="taxonomic scope" value="Bacteria"/>
</dbReference>
<dbReference type="HOGENOM" id="CLU_050019_1_0_7"/>
<dbReference type="InParanoid" id="A0LH26"/>
<dbReference type="OrthoDB" id="9783139at2"/>
<dbReference type="Proteomes" id="UP000001784">
    <property type="component" value="Chromosome"/>
</dbReference>
<dbReference type="GO" id="GO:0003677">
    <property type="term" value="F:DNA binding"/>
    <property type="evidence" value="ECO:0007669"/>
    <property type="project" value="InterPro"/>
</dbReference>
<dbReference type="GO" id="GO:0045892">
    <property type="term" value="P:negative regulation of DNA-templated transcription"/>
    <property type="evidence" value="ECO:0007669"/>
    <property type="project" value="UniProtKB-UniRule"/>
</dbReference>
<dbReference type="Gene3D" id="3.30.450.40">
    <property type="match status" value="1"/>
</dbReference>
<dbReference type="Gene3D" id="3.30.390.60">
    <property type="entry name" value="Heat-inducible transcription repressor hrca homolog, domain 3"/>
    <property type="match status" value="1"/>
</dbReference>
<dbReference type="Gene3D" id="1.10.10.10">
    <property type="entry name" value="Winged helix-like DNA-binding domain superfamily/Winged helix DNA-binding domain"/>
    <property type="match status" value="1"/>
</dbReference>
<dbReference type="HAMAP" id="MF_00081">
    <property type="entry name" value="HrcA"/>
    <property type="match status" value="1"/>
</dbReference>
<dbReference type="InterPro" id="IPR029016">
    <property type="entry name" value="GAF-like_dom_sf"/>
</dbReference>
<dbReference type="InterPro" id="IPR002571">
    <property type="entry name" value="HrcA"/>
</dbReference>
<dbReference type="InterPro" id="IPR021153">
    <property type="entry name" value="HrcA_C"/>
</dbReference>
<dbReference type="InterPro" id="IPR036388">
    <property type="entry name" value="WH-like_DNA-bd_sf"/>
</dbReference>
<dbReference type="InterPro" id="IPR036390">
    <property type="entry name" value="WH_DNA-bd_sf"/>
</dbReference>
<dbReference type="InterPro" id="IPR023120">
    <property type="entry name" value="WHTH_transcript_rep_HrcA_IDD"/>
</dbReference>
<dbReference type="NCBIfam" id="TIGR00331">
    <property type="entry name" value="hrcA"/>
    <property type="match status" value="1"/>
</dbReference>
<dbReference type="PANTHER" id="PTHR34824">
    <property type="entry name" value="HEAT-INDUCIBLE TRANSCRIPTION REPRESSOR HRCA"/>
    <property type="match status" value="1"/>
</dbReference>
<dbReference type="PANTHER" id="PTHR34824:SF1">
    <property type="entry name" value="HEAT-INDUCIBLE TRANSCRIPTION REPRESSOR HRCA"/>
    <property type="match status" value="1"/>
</dbReference>
<dbReference type="Pfam" id="PF01628">
    <property type="entry name" value="HrcA"/>
    <property type="match status" value="1"/>
</dbReference>
<dbReference type="PIRSF" id="PIRSF005485">
    <property type="entry name" value="HrcA"/>
    <property type="match status" value="1"/>
</dbReference>
<dbReference type="SUPFAM" id="SSF55781">
    <property type="entry name" value="GAF domain-like"/>
    <property type="match status" value="1"/>
</dbReference>
<dbReference type="SUPFAM" id="SSF46785">
    <property type="entry name" value="Winged helix' DNA-binding domain"/>
    <property type="match status" value="1"/>
</dbReference>
<keyword id="KW-1185">Reference proteome</keyword>
<keyword id="KW-0678">Repressor</keyword>
<keyword id="KW-0346">Stress response</keyword>
<keyword id="KW-0804">Transcription</keyword>
<keyword id="KW-0805">Transcription regulation</keyword>
<accession>A0LH26</accession>
<sequence length="348" mass="40433">MSDLSKRDQHVLEAVVTDYIHTGEPVGSRTISKRYGVNVSSATIRNVMADLEEMGFLHQPHTSAGRIPTERGLRFYLDSIMQFKALEEREREMIREAFRNELPDVKELLRRTSRVLSRFCRQAGVVLWPKLTLTLFKRIEFIRLRAHQIMVLLVSKTGLVHHTLVEWEQDIGQEELDKYSRYLNDLLEDMPLGEVKQRVLEEMRDEKVLFDQLYSRALKITDRVFQQNLESSDVYIEGRTNLLNNPEFADVDRMRRILDAFEDKSRIIRLLDRTLRNSTGVQIILGTENDLQELNEISLISSPYRRGDTLLGVMGVIGPLRMDYSRIIPVVEFTADLLSQLLEEPGED</sequence>
<organism>
    <name type="scientific">Syntrophobacter fumaroxidans (strain DSM 10017 / MPOB)</name>
    <dbReference type="NCBI Taxonomy" id="335543"/>
    <lineage>
        <taxon>Bacteria</taxon>
        <taxon>Pseudomonadati</taxon>
        <taxon>Thermodesulfobacteriota</taxon>
        <taxon>Syntrophobacteria</taxon>
        <taxon>Syntrophobacterales</taxon>
        <taxon>Syntrophobacteraceae</taxon>
        <taxon>Syntrophobacter</taxon>
    </lineage>
</organism>
<proteinExistence type="inferred from homology"/>
<gene>
    <name evidence="1" type="primary">hrcA</name>
    <name type="ordered locus">Sfum_1034</name>
</gene>
<comment type="function">
    <text evidence="1">Negative regulator of class I heat shock genes (grpE-dnaK-dnaJ and groELS operons). Prevents heat-shock induction of these operons.</text>
</comment>
<comment type="similarity">
    <text evidence="1">Belongs to the HrcA family.</text>
</comment>
<name>HRCA_SYNFM</name>
<protein>
    <recommendedName>
        <fullName evidence="1">Heat-inducible transcription repressor HrcA</fullName>
    </recommendedName>
</protein>
<reference key="1">
    <citation type="submission" date="2006-10" db="EMBL/GenBank/DDBJ databases">
        <title>Complete sequence of Syntrophobacter fumaroxidans MPOB.</title>
        <authorList>
            <consortium name="US DOE Joint Genome Institute"/>
            <person name="Copeland A."/>
            <person name="Lucas S."/>
            <person name="Lapidus A."/>
            <person name="Barry K."/>
            <person name="Detter J.C."/>
            <person name="Glavina del Rio T."/>
            <person name="Hammon N."/>
            <person name="Israni S."/>
            <person name="Pitluck S."/>
            <person name="Goltsman E.G."/>
            <person name="Martinez M."/>
            <person name="Schmutz J."/>
            <person name="Larimer F."/>
            <person name="Land M."/>
            <person name="Hauser L."/>
            <person name="Kyrpides N."/>
            <person name="Kim E."/>
            <person name="Boone D.R."/>
            <person name="Brockman F."/>
            <person name="Culley D."/>
            <person name="Ferry J."/>
            <person name="Gunsalus R."/>
            <person name="McInerney M.J."/>
            <person name="Morrison M."/>
            <person name="Plugge C."/>
            <person name="Rohlin L."/>
            <person name="Scholten J."/>
            <person name="Sieber J."/>
            <person name="Stams A.J.M."/>
            <person name="Worm P."/>
            <person name="Henstra A.M."/>
            <person name="Richardson P."/>
        </authorList>
    </citation>
    <scope>NUCLEOTIDE SEQUENCE [LARGE SCALE GENOMIC DNA]</scope>
    <source>
        <strain>DSM 10017 / MPOB</strain>
    </source>
</reference>
<feature type="chain" id="PRO_1000010467" description="Heat-inducible transcription repressor HrcA">
    <location>
        <begin position="1"/>
        <end position="348"/>
    </location>
</feature>